<protein>
    <recommendedName>
        <fullName>Carbamate kinase 1</fullName>
        <ecNumber>2.7.2.2</ecNumber>
    </recommendedName>
</protein>
<organism>
    <name type="scientific">Staphylococcus aureus (strain N315)</name>
    <dbReference type="NCBI Taxonomy" id="158879"/>
    <lineage>
        <taxon>Bacteria</taxon>
        <taxon>Bacillati</taxon>
        <taxon>Bacillota</taxon>
        <taxon>Bacilli</taxon>
        <taxon>Bacillales</taxon>
        <taxon>Staphylococcaceae</taxon>
        <taxon>Staphylococcus</taxon>
    </lineage>
</organism>
<keyword id="KW-0056">Arginine metabolism</keyword>
<keyword id="KW-0067">ATP-binding</keyword>
<keyword id="KW-0963">Cytoplasm</keyword>
<keyword id="KW-0418">Kinase</keyword>
<keyword id="KW-0547">Nucleotide-binding</keyword>
<keyword id="KW-0808">Transferase</keyword>
<name>ARCC1_STAAN</name>
<dbReference type="EC" id="2.7.2.2"/>
<dbReference type="EMBL" id="BA000018">
    <property type="protein sequence ID" value="BAB42265.1"/>
    <property type="molecule type" value="Genomic_DNA"/>
</dbReference>
<dbReference type="PIR" id="E89888">
    <property type="entry name" value="E89888"/>
</dbReference>
<dbReference type="SMR" id="Q7A627"/>
<dbReference type="EnsemblBacteria" id="BAB42265">
    <property type="protein sequence ID" value="BAB42265"/>
    <property type="gene ID" value="BAB42265"/>
</dbReference>
<dbReference type="KEGG" id="sau:SA1013"/>
<dbReference type="HOGENOM" id="CLU_076278_0_0_9"/>
<dbReference type="UniPathway" id="UPA00996">
    <property type="reaction ID" value="UER00366"/>
</dbReference>
<dbReference type="GO" id="GO:0005829">
    <property type="term" value="C:cytosol"/>
    <property type="evidence" value="ECO:0007669"/>
    <property type="project" value="TreeGrafter"/>
</dbReference>
<dbReference type="GO" id="GO:0005524">
    <property type="term" value="F:ATP binding"/>
    <property type="evidence" value="ECO:0007669"/>
    <property type="project" value="UniProtKB-KW"/>
</dbReference>
<dbReference type="GO" id="GO:0008804">
    <property type="term" value="F:carbamate kinase activity"/>
    <property type="evidence" value="ECO:0007669"/>
    <property type="project" value="UniProtKB-EC"/>
</dbReference>
<dbReference type="GO" id="GO:0019546">
    <property type="term" value="P:arginine deiminase pathway"/>
    <property type="evidence" value="ECO:0007669"/>
    <property type="project" value="TreeGrafter"/>
</dbReference>
<dbReference type="CDD" id="cd04235">
    <property type="entry name" value="AAK_CK"/>
    <property type="match status" value="1"/>
</dbReference>
<dbReference type="FunFam" id="3.40.1160.10:FF:000007">
    <property type="entry name" value="Carbamate kinase"/>
    <property type="match status" value="1"/>
</dbReference>
<dbReference type="Gene3D" id="3.40.1160.10">
    <property type="entry name" value="Acetylglutamate kinase-like"/>
    <property type="match status" value="1"/>
</dbReference>
<dbReference type="InterPro" id="IPR036393">
    <property type="entry name" value="AceGlu_kinase-like_sf"/>
</dbReference>
<dbReference type="InterPro" id="IPR001048">
    <property type="entry name" value="Asp/Glu/Uridylate_kinase"/>
</dbReference>
<dbReference type="InterPro" id="IPR003964">
    <property type="entry name" value="Carb_kinase"/>
</dbReference>
<dbReference type="NCBIfam" id="TIGR00746">
    <property type="entry name" value="arcC"/>
    <property type="match status" value="1"/>
</dbReference>
<dbReference type="NCBIfam" id="NF009007">
    <property type="entry name" value="PRK12352.1"/>
    <property type="match status" value="1"/>
</dbReference>
<dbReference type="PANTHER" id="PTHR30409">
    <property type="entry name" value="CARBAMATE KINASE"/>
    <property type="match status" value="1"/>
</dbReference>
<dbReference type="PANTHER" id="PTHR30409:SF1">
    <property type="entry name" value="CARBAMATE KINASE-RELATED"/>
    <property type="match status" value="1"/>
</dbReference>
<dbReference type="Pfam" id="PF00696">
    <property type="entry name" value="AA_kinase"/>
    <property type="match status" value="1"/>
</dbReference>
<dbReference type="PIRSF" id="PIRSF000723">
    <property type="entry name" value="Carbamate_kin"/>
    <property type="match status" value="1"/>
</dbReference>
<dbReference type="PRINTS" id="PR01469">
    <property type="entry name" value="CARBMTKINASE"/>
</dbReference>
<dbReference type="SUPFAM" id="SSF53633">
    <property type="entry name" value="Carbamate kinase-like"/>
    <property type="match status" value="1"/>
</dbReference>
<reference key="1">
    <citation type="journal article" date="2001" name="Lancet">
        <title>Whole genome sequencing of meticillin-resistant Staphylococcus aureus.</title>
        <authorList>
            <person name="Kuroda M."/>
            <person name="Ohta T."/>
            <person name="Uchiyama I."/>
            <person name="Baba T."/>
            <person name="Yuzawa H."/>
            <person name="Kobayashi I."/>
            <person name="Cui L."/>
            <person name="Oguchi A."/>
            <person name="Aoki K."/>
            <person name="Nagai Y."/>
            <person name="Lian J.-Q."/>
            <person name="Ito T."/>
            <person name="Kanamori M."/>
            <person name="Matsumaru H."/>
            <person name="Maruyama A."/>
            <person name="Murakami H."/>
            <person name="Hosoyama A."/>
            <person name="Mizutani-Ui Y."/>
            <person name="Takahashi N.K."/>
            <person name="Sawano T."/>
            <person name="Inoue R."/>
            <person name="Kaito C."/>
            <person name="Sekimizu K."/>
            <person name="Hirakawa H."/>
            <person name="Kuhara S."/>
            <person name="Goto S."/>
            <person name="Yabuzaki J."/>
            <person name="Kanehisa M."/>
            <person name="Yamashita A."/>
            <person name="Oshima K."/>
            <person name="Furuya K."/>
            <person name="Yoshino C."/>
            <person name="Shiba T."/>
            <person name="Hattori M."/>
            <person name="Ogasawara N."/>
            <person name="Hayashi H."/>
            <person name="Hiramatsu K."/>
        </authorList>
    </citation>
    <scope>NUCLEOTIDE SEQUENCE [LARGE SCALE GENOMIC DNA]</scope>
    <source>
        <strain>N315</strain>
    </source>
</reference>
<reference key="2">
    <citation type="journal article" date="2005" name="J. Microbiol. Methods">
        <title>Correlation of proteomic and transcriptomic profiles of Staphylococcus aureus during the post-exponential phase of growth.</title>
        <authorList>
            <person name="Scherl A."/>
            <person name="Francois P."/>
            <person name="Bento M."/>
            <person name="Deshusses J.M."/>
            <person name="Charbonnier Y."/>
            <person name="Converset V."/>
            <person name="Huyghe A."/>
            <person name="Walter N."/>
            <person name="Hoogland C."/>
            <person name="Appel R.D."/>
            <person name="Sanchez J.-C."/>
            <person name="Zimmermann-Ivol C.G."/>
            <person name="Corthals G.L."/>
            <person name="Hochstrasser D.F."/>
            <person name="Schrenzel J."/>
        </authorList>
    </citation>
    <scope>IDENTIFICATION BY MASS SPECTROMETRY</scope>
    <source>
        <strain>N315</strain>
    </source>
</reference>
<reference key="3">
    <citation type="submission" date="2007-10" db="UniProtKB">
        <title>Shotgun proteomic analysis of total and membrane protein extracts of S. aureus strain N315.</title>
        <authorList>
            <person name="Vaezzadeh A.R."/>
            <person name="Deshusses J."/>
            <person name="Lescuyer P."/>
            <person name="Hochstrasser D.F."/>
        </authorList>
    </citation>
    <scope>IDENTIFICATION BY MASS SPECTROMETRY [LARGE SCALE ANALYSIS]</scope>
    <source>
        <strain>N315</strain>
    </source>
</reference>
<evidence type="ECO:0000305" key="1"/>
<proteinExistence type="evidence at protein level"/>
<feature type="chain" id="PRO_0000269239" description="Carbamate kinase 1">
    <location>
        <begin position="1"/>
        <end position="310"/>
    </location>
</feature>
<comment type="catalytic activity">
    <reaction>
        <text>hydrogencarbonate + NH4(+) + ATP = carbamoyl phosphate + ADP + H2O + H(+)</text>
        <dbReference type="Rhea" id="RHEA:10152"/>
        <dbReference type="ChEBI" id="CHEBI:15377"/>
        <dbReference type="ChEBI" id="CHEBI:15378"/>
        <dbReference type="ChEBI" id="CHEBI:17544"/>
        <dbReference type="ChEBI" id="CHEBI:28938"/>
        <dbReference type="ChEBI" id="CHEBI:30616"/>
        <dbReference type="ChEBI" id="CHEBI:58228"/>
        <dbReference type="ChEBI" id="CHEBI:456216"/>
        <dbReference type="EC" id="2.7.2.2"/>
    </reaction>
</comment>
<comment type="pathway">
    <text>Metabolic intermediate metabolism; carbamoyl phosphate degradation; CO(2) and NH(3) from carbamoyl phosphate: step 1/1.</text>
</comment>
<comment type="subcellular location">
    <subcellularLocation>
        <location evidence="1">Cytoplasm</location>
    </subcellularLocation>
</comment>
<comment type="similarity">
    <text evidence="1">Belongs to the carbamate kinase family.</text>
</comment>
<gene>
    <name type="primary">arcC1</name>
    <name type="ordered locus">SA1013</name>
</gene>
<accession>Q7A627</accession>
<sequence length="310" mass="33596">MAKIVVALGGNALGKSPQEQLELVKNTAKSLVGLITKGHEIVISHGNGPQVGSINLGLNYAAEHNQGPAFPFAECGAMSQAYIGYQLQESLQNELHSIGMDKQVVTLVTQVEVDENDPAFNNPSKPIGLFYNKEEAEQIQKEKGFIFVEDAGRGYRRVVPSPQPISIIELESIKTLIKNDTLVIAAGGGGIPVIREQHDGFKGIDAVIDKDKTSALLGANIQCDQLIILTAIDYVYINFNTENQQPLKTTNVDELKRYIDENQFAKGSMLPKIEAAISFIENNPKGSVLITSLNELDAALEGKVGTVIKK</sequence>